<gene>
    <name evidence="1" type="primary">rpsB</name>
    <name type="ordered locus">Lm4b_01668</name>
</gene>
<sequence>MPVISMKQLLEAGVHFGHQTRRWNPKMKKYIFTERNGIYIIDLQKTVKKVDEAFNFMREVASDNGTILFVGTKKQAQESVRDEAIRSGQYFVNHRWLGGTLTNFETIQKRIQHLKKIERMEADGTFEVLPKKEVVLLKKEQEKLERFLGGIKDMKGLPDALFIVDPRKERIAVAEARKLHIPIIGIVDTNCDPDEIDYVIPANDDAIRAVKLLTAKMADAIIEVNQGEELTEAEVAPVEEKATEETTEA</sequence>
<keyword id="KW-0687">Ribonucleoprotein</keyword>
<keyword id="KW-0689">Ribosomal protein</keyword>
<protein>
    <recommendedName>
        <fullName evidence="1">Small ribosomal subunit protein uS2</fullName>
    </recommendedName>
    <alternativeName>
        <fullName evidence="2">30S ribosomal protein S2</fullName>
    </alternativeName>
</protein>
<name>RS2_LISMC</name>
<evidence type="ECO:0000255" key="1">
    <source>
        <dbReference type="HAMAP-Rule" id="MF_00291"/>
    </source>
</evidence>
<evidence type="ECO:0000305" key="2"/>
<proteinExistence type="inferred from homology"/>
<dbReference type="EMBL" id="FM242711">
    <property type="protein sequence ID" value="CAS05429.1"/>
    <property type="molecule type" value="Genomic_DNA"/>
</dbReference>
<dbReference type="RefSeq" id="WP_003723971.1">
    <property type="nucleotide sequence ID" value="NC_012488.1"/>
</dbReference>
<dbReference type="SMR" id="C1KVV4"/>
<dbReference type="GeneID" id="93239536"/>
<dbReference type="KEGG" id="lmc:Lm4b_01668"/>
<dbReference type="HOGENOM" id="CLU_040318_1_2_9"/>
<dbReference type="GO" id="GO:0022627">
    <property type="term" value="C:cytosolic small ribosomal subunit"/>
    <property type="evidence" value="ECO:0007669"/>
    <property type="project" value="TreeGrafter"/>
</dbReference>
<dbReference type="GO" id="GO:0003735">
    <property type="term" value="F:structural constituent of ribosome"/>
    <property type="evidence" value="ECO:0007669"/>
    <property type="project" value="InterPro"/>
</dbReference>
<dbReference type="GO" id="GO:0006412">
    <property type="term" value="P:translation"/>
    <property type="evidence" value="ECO:0007669"/>
    <property type="project" value="UniProtKB-UniRule"/>
</dbReference>
<dbReference type="CDD" id="cd01425">
    <property type="entry name" value="RPS2"/>
    <property type="match status" value="1"/>
</dbReference>
<dbReference type="FunFam" id="1.10.287.610:FF:000001">
    <property type="entry name" value="30S ribosomal protein S2"/>
    <property type="match status" value="1"/>
</dbReference>
<dbReference type="Gene3D" id="3.40.50.10490">
    <property type="entry name" value="Glucose-6-phosphate isomerase like protein, domain 1"/>
    <property type="match status" value="1"/>
</dbReference>
<dbReference type="Gene3D" id="1.10.287.610">
    <property type="entry name" value="Helix hairpin bin"/>
    <property type="match status" value="1"/>
</dbReference>
<dbReference type="HAMAP" id="MF_00291_B">
    <property type="entry name" value="Ribosomal_uS2_B"/>
    <property type="match status" value="1"/>
</dbReference>
<dbReference type="InterPro" id="IPR001865">
    <property type="entry name" value="Ribosomal_uS2"/>
</dbReference>
<dbReference type="InterPro" id="IPR005706">
    <property type="entry name" value="Ribosomal_uS2_bac/mit/plastid"/>
</dbReference>
<dbReference type="InterPro" id="IPR018130">
    <property type="entry name" value="Ribosomal_uS2_CS"/>
</dbReference>
<dbReference type="InterPro" id="IPR023591">
    <property type="entry name" value="Ribosomal_uS2_flav_dom_sf"/>
</dbReference>
<dbReference type="NCBIfam" id="TIGR01011">
    <property type="entry name" value="rpsB_bact"/>
    <property type="match status" value="1"/>
</dbReference>
<dbReference type="PANTHER" id="PTHR12534">
    <property type="entry name" value="30S RIBOSOMAL PROTEIN S2 PROKARYOTIC AND ORGANELLAR"/>
    <property type="match status" value="1"/>
</dbReference>
<dbReference type="PANTHER" id="PTHR12534:SF0">
    <property type="entry name" value="SMALL RIBOSOMAL SUBUNIT PROTEIN US2M"/>
    <property type="match status" value="1"/>
</dbReference>
<dbReference type="Pfam" id="PF00318">
    <property type="entry name" value="Ribosomal_S2"/>
    <property type="match status" value="1"/>
</dbReference>
<dbReference type="PRINTS" id="PR00395">
    <property type="entry name" value="RIBOSOMALS2"/>
</dbReference>
<dbReference type="SUPFAM" id="SSF52313">
    <property type="entry name" value="Ribosomal protein S2"/>
    <property type="match status" value="1"/>
</dbReference>
<dbReference type="PROSITE" id="PS00962">
    <property type="entry name" value="RIBOSOMAL_S2_1"/>
    <property type="match status" value="1"/>
</dbReference>
<dbReference type="PROSITE" id="PS00963">
    <property type="entry name" value="RIBOSOMAL_S2_2"/>
    <property type="match status" value="1"/>
</dbReference>
<accession>C1KVV4</accession>
<organism>
    <name type="scientific">Listeria monocytogenes serotype 4b (strain CLIP80459)</name>
    <dbReference type="NCBI Taxonomy" id="568819"/>
    <lineage>
        <taxon>Bacteria</taxon>
        <taxon>Bacillati</taxon>
        <taxon>Bacillota</taxon>
        <taxon>Bacilli</taxon>
        <taxon>Bacillales</taxon>
        <taxon>Listeriaceae</taxon>
        <taxon>Listeria</taxon>
    </lineage>
</organism>
<reference key="1">
    <citation type="journal article" date="2012" name="BMC Genomics">
        <title>Comparative genomics and transcriptomics of lineages I, II, and III strains of Listeria monocytogenes.</title>
        <authorList>
            <person name="Hain T."/>
            <person name="Ghai R."/>
            <person name="Billion A."/>
            <person name="Kuenne C.T."/>
            <person name="Steinweg C."/>
            <person name="Izar B."/>
            <person name="Mohamed W."/>
            <person name="Mraheil M."/>
            <person name="Domann E."/>
            <person name="Schaffrath S."/>
            <person name="Karst U."/>
            <person name="Goesmann A."/>
            <person name="Oehm S."/>
            <person name="Puhler A."/>
            <person name="Merkl R."/>
            <person name="Vorwerk S."/>
            <person name="Glaser P."/>
            <person name="Garrido P."/>
            <person name="Rusniok C."/>
            <person name="Buchrieser C."/>
            <person name="Goebel W."/>
            <person name="Chakraborty T."/>
        </authorList>
    </citation>
    <scope>NUCLEOTIDE SEQUENCE [LARGE SCALE GENOMIC DNA]</scope>
    <source>
        <strain>CLIP80459</strain>
    </source>
</reference>
<comment type="similarity">
    <text evidence="1">Belongs to the universal ribosomal protein uS2 family.</text>
</comment>
<feature type="chain" id="PRO_1000204887" description="Small ribosomal subunit protein uS2">
    <location>
        <begin position="1"/>
        <end position="249"/>
    </location>
</feature>